<sequence length="441" mass="48629">MPVAKDLFPEYGTLATGENEPSRNIRRAQKLREFQNLELPPYLAKQVAAKMAEKGLAVEATGGVAVQRIAGGSQSGQKALMGASSSALTKHTPSASQPTTHDSLTNLGANLTQSKPAWHAPWEIYRVITGHQGWVRSVCVEPENQWFATGSADKTIKIWDLATGKLRLTLTGHIMGVRALGVSPRHPYMFSGGEDKMVKCWDLETNKVVRHYHGHLSAVYSLDIHPTLDVLVSAGRDAVARVWDIRTRDPVVVLSGHKSTINRVKFQASEPQVITASADETVRLWNLQAGKTMTTLTHHKKSVRGLTLHPEEFTFSTASANSSKQWKCPEGDLVLNYDDQNAIINTLSVNQDNVMFSGGDNGSIGFYDWKTGHMFQSTQSIPIPGSIESENGIFDSSFDKTGLRLITCEADKSIKMWREKPNATAESDPGLEWKPKIYQTY</sequence>
<evidence type="ECO:0000250" key="1"/>
<evidence type="ECO:0000256" key="2">
    <source>
        <dbReference type="SAM" id="MobiDB-lite"/>
    </source>
</evidence>
<evidence type="ECO:0000305" key="3"/>
<comment type="function">
    <text evidence="1">Involved in pre-mRNA splicing and required for cell cycle progression at G2/M.</text>
</comment>
<comment type="subunit">
    <text evidence="1">Associated with the spliceosome.</text>
</comment>
<comment type="subcellular location">
    <subcellularLocation>
        <location evidence="1">Cytoplasm</location>
    </subcellularLocation>
    <subcellularLocation>
        <location evidence="1">Nucleus</location>
    </subcellularLocation>
</comment>
<comment type="similarity">
    <text evidence="3">Belongs to the WD repeat PRL1/PRL2 family.</text>
</comment>
<name>PRP46_YARLI</name>
<protein>
    <recommendedName>
        <fullName>Pre-mRNA-splicing factor PRP46</fullName>
    </recommendedName>
    <alternativeName>
        <fullName>Pre-mRNA-processing protein 46</fullName>
    </alternativeName>
</protein>
<reference key="1">
    <citation type="journal article" date="2004" name="Nature">
        <title>Genome evolution in yeasts.</title>
        <authorList>
            <person name="Dujon B."/>
            <person name="Sherman D."/>
            <person name="Fischer G."/>
            <person name="Durrens P."/>
            <person name="Casaregola S."/>
            <person name="Lafontaine I."/>
            <person name="de Montigny J."/>
            <person name="Marck C."/>
            <person name="Neuveglise C."/>
            <person name="Talla E."/>
            <person name="Goffard N."/>
            <person name="Frangeul L."/>
            <person name="Aigle M."/>
            <person name="Anthouard V."/>
            <person name="Babour A."/>
            <person name="Barbe V."/>
            <person name="Barnay S."/>
            <person name="Blanchin S."/>
            <person name="Beckerich J.-M."/>
            <person name="Beyne E."/>
            <person name="Bleykasten C."/>
            <person name="Boisrame A."/>
            <person name="Boyer J."/>
            <person name="Cattolico L."/>
            <person name="Confanioleri F."/>
            <person name="de Daruvar A."/>
            <person name="Despons L."/>
            <person name="Fabre E."/>
            <person name="Fairhead C."/>
            <person name="Ferry-Dumazet H."/>
            <person name="Groppi A."/>
            <person name="Hantraye F."/>
            <person name="Hennequin C."/>
            <person name="Jauniaux N."/>
            <person name="Joyet P."/>
            <person name="Kachouri R."/>
            <person name="Kerrest A."/>
            <person name="Koszul R."/>
            <person name="Lemaire M."/>
            <person name="Lesur I."/>
            <person name="Ma L."/>
            <person name="Muller H."/>
            <person name="Nicaud J.-M."/>
            <person name="Nikolski M."/>
            <person name="Oztas S."/>
            <person name="Ozier-Kalogeropoulos O."/>
            <person name="Pellenz S."/>
            <person name="Potier S."/>
            <person name="Richard G.-F."/>
            <person name="Straub M.-L."/>
            <person name="Suleau A."/>
            <person name="Swennen D."/>
            <person name="Tekaia F."/>
            <person name="Wesolowski-Louvel M."/>
            <person name="Westhof E."/>
            <person name="Wirth B."/>
            <person name="Zeniou-Meyer M."/>
            <person name="Zivanovic Y."/>
            <person name="Bolotin-Fukuhara M."/>
            <person name="Thierry A."/>
            <person name="Bouchier C."/>
            <person name="Caudron B."/>
            <person name="Scarpelli C."/>
            <person name="Gaillardin C."/>
            <person name="Weissenbach J."/>
            <person name="Wincker P."/>
            <person name="Souciet J.-L."/>
        </authorList>
    </citation>
    <scope>NUCLEOTIDE SEQUENCE [LARGE SCALE GENOMIC DNA]</scope>
    <source>
        <strain>CLIB 122 / E 150</strain>
    </source>
</reference>
<dbReference type="EMBL" id="CR382131">
    <property type="protein sequence ID" value="CAG79134.2"/>
    <property type="molecule type" value="Genomic_DNA"/>
</dbReference>
<dbReference type="RefSeq" id="XP_503553.2">
    <property type="nucleotide sequence ID" value="XM_503553.2"/>
</dbReference>
<dbReference type="SMR" id="Q6C709"/>
<dbReference type="FunCoup" id="Q6C709">
    <property type="interactions" value="1002"/>
</dbReference>
<dbReference type="STRING" id="284591.Q6C709"/>
<dbReference type="EnsemblFungi" id="CAG79134">
    <property type="protein sequence ID" value="CAG79134"/>
    <property type="gene ID" value="YALI0_E04697g"/>
</dbReference>
<dbReference type="KEGG" id="yli:2912209"/>
<dbReference type="VEuPathDB" id="FungiDB:YALI0_E04697g"/>
<dbReference type="HOGENOM" id="CLU_000288_72_2_1"/>
<dbReference type="InParanoid" id="Q6C709"/>
<dbReference type="OMA" id="FAMCFDQ"/>
<dbReference type="OrthoDB" id="17222at4891"/>
<dbReference type="Proteomes" id="UP000001300">
    <property type="component" value="Chromosome E"/>
</dbReference>
<dbReference type="GO" id="GO:0071013">
    <property type="term" value="C:catalytic step 2 spliceosome"/>
    <property type="evidence" value="ECO:0000318"/>
    <property type="project" value="GO_Central"/>
</dbReference>
<dbReference type="GO" id="GO:0005737">
    <property type="term" value="C:cytoplasm"/>
    <property type="evidence" value="ECO:0007669"/>
    <property type="project" value="UniProtKB-SubCell"/>
</dbReference>
<dbReference type="GO" id="GO:0071014">
    <property type="term" value="C:post-mRNA release spliceosomal complex"/>
    <property type="evidence" value="ECO:0007669"/>
    <property type="project" value="EnsemblFungi"/>
</dbReference>
<dbReference type="GO" id="GO:0000974">
    <property type="term" value="C:Prp19 complex"/>
    <property type="evidence" value="ECO:0000318"/>
    <property type="project" value="GO_Central"/>
</dbReference>
<dbReference type="GO" id="GO:0045292">
    <property type="term" value="P:mRNA cis splicing, via spliceosome"/>
    <property type="evidence" value="ECO:0007669"/>
    <property type="project" value="EnsemblFungi"/>
</dbReference>
<dbReference type="GO" id="GO:0000398">
    <property type="term" value="P:mRNA splicing, via spliceosome"/>
    <property type="evidence" value="ECO:0000318"/>
    <property type="project" value="GO_Central"/>
</dbReference>
<dbReference type="CDD" id="cd00200">
    <property type="entry name" value="WD40"/>
    <property type="match status" value="1"/>
</dbReference>
<dbReference type="FunFam" id="2.130.10.10:FF:000012">
    <property type="entry name" value="Putative pleiotropic regulator 1"/>
    <property type="match status" value="1"/>
</dbReference>
<dbReference type="Gene3D" id="2.130.10.10">
    <property type="entry name" value="YVTN repeat-like/Quinoprotein amine dehydrogenase"/>
    <property type="match status" value="1"/>
</dbReference>
<dbReference type="InterPro" id="IPR020472">
    <property type="entry name" value="G-protein_beta_WD-40_rep"/>
</dbReference>
<dbReference type="InterPro" id="IPR045241">
    <property type="entry name" value="Prp46/PLRG1-like"/>
</dbReference>
<dbReference type="InterPro" id="IPR015943">
    <property type="entry name" value="WD40/YVTN_repeat-like_dom_sf"/>
</dbReference>
<dbReference type="InterPro" id="IPR019775">
    <property type="entry name" value="WD40_repeat_CS"/>
</dbReference>
<dbReference type="InterPro" id="IPR036322">
    <property type="entry name" value="WD40_repeat_dom_sf"/>
</dbReference>
<dbReference type="InterPro" id="IPR001680">
    <property type="entry name" value="WD40_rpt"/>
</dbReference>
<dbReference type="PANTHER" id="PTHR19923:SF0">
    <property type="entry name" value="PLEIOTROPIC REGULATOR 1"/>
    <property type="match status" value="1"/>
</dbReference>
<dbReference type="PANTHER" id="PTHR19923">
    <property type="entry name" value="WD40 REPEAT PROTEINPRL1/PRL2-RELATED"/>
    <property type="match status" value="1"/>
</dbReference>
<dbReference type="Pfam" id="PF00400">
    <property type="entry name" value="WD40"/>
    <property type="match status" value="5"/>
</dbReference>
<dbReference type="PRINTS" id="PR00320">
    <property type="entry name" value="GPROTEINBRPT"/>
</dbReference>
<dbReference type="SMART" id="SM00320">
    <property type="entry name" value="WD40"/>
    <property type="match status" value="7"/>
</dbReference>
<dbReference type="SUPFAM" id="SSF50978">
    <property type="entry name" value="WD40 repeat-like"/>
    <property type="match status" value="1"/>
</dbReference>
<dbReference type="PROSITE" id="PS00678">
    <property type="entry name" value="WD_REPEATS_1"/>
    <property type="match status" value="2"/>
</dbReference>
<dbReference type="PROSITE" id="PS50082">
    <property type="entry name" value="WD_REPEATS_2"/>
    <property type="match status" value="4"/>
</dbReference>
<dbReference type="PROSITE" id="PS50294">
    <property type="entry name" value="WD_REPEATS_REGION"/>
    <property type="match status" value="1"/>
</dbReference>
<keyword id="KW-0963">Cytoplasm</keyword>
<keyword id="KW-0507">mRNA processing</keyword>
<keyword id="KW-0508">mRNA splicing</keyword>
<keyword id="KW-0539">Nucleus</keyword>
<keyword id="KW-1185">Reference proteome</keyword>
<keyword id="KW-0677">Repeat</keyword>
<keyword id="KW-0747">Spliceosome</keyword>
<keyword id="KW-0853">WD repeat</keyword>
<accession>Q6C709</accession>
<feature type="chain" id="PRO_0000051168" description="Pre-mRNA-splicing factor PRP46">
    <location>
        <begin position="1"/>
        <end position="441"/>
    </location>
</feature>
<feature type="repeat" description="WD 1">
    <location>
        <begin position="130"/>
        <end position="169"/>
    </location>
</feature>
<feature type="repeat" description="WD 2">
    <location>
        <begin position="172"/>
        <end position="211"/>
    </location>
</feature>
<feature type="repeat" description="WD 3">
    <location>
        <begin position="214"/>
        <end position="253"/>
    </location>
</feature>
<feature type="repeat" description="WD 4">
    <location>
        <begin position="256"/>
        <end position="295"/>
    </location>
</feature>
<feature type="repeat" description="WD 5">
    <location>
        <begin position="298"/>
        <end position="336"/>
    </location>
</feature>
<feature type="repeat" description="WD 6">
    <location>
        <begin position="339"/>
        <end position="379"/>
    </location>
</feature>
<feature type="repeat" description="WD 7">
    <location>
        <begin position="388"/>
        <end position="427"/>
    </location>
</feature>
<feature type="region of interest" description="Disordered" evidence="2">
    <location>
        <begin position="1"/>
        <end position="22"/>
    </location>
</feature>
<feature type="region of interest" description="Disordered" evidence="2">
    <location>
        <begin position="81"/>
        <end position="107"/>
    </location>
</feature>
<feature type="compositionally biased region" description="Polar residues" evidence="2">
    <location>
        <begin position="83"/>
        <end position="107"/>
    </location>
</feature>
<organism>
    <name type="scientific">Yarrowia lipolytica (strain CLIB 122 / E 150)</name>
    <name type="common">Yeast</name>
    <name type="synonym">Candida lipolytica</name>
    <dbReference type="NCBI Taxonomy" id="284591"/>
    <lineage>
        <taxon>Eukaryota</taxon>
        <taxon>Fungi</taxon>
        <taxon>Dikarya</taxon>
        <taxon>Ascomycota</taxon>
        <taxon>Saccharomycotina</taxon>
        <taxon>Dipodascomycetes</taxon>
        <taxon>Dipodascales</taxon>
        <taxon>Dipodascales incertae sedis</taxon>
        <taxon>Yarrowia</taxon>
    </lineage>
</organism>
<gene>
    <name type="primary">PRP46</name>
    <name type="ordered locus">YALI0E04697g</name>
</gene>
<proteinExistence type="inferred from homology"/>